<reference key="1">
    <citation type="journal article" date="2004" name="Mol. Biol. Evol.">
        <title>The chloroplast genome of Nymphaea alba: whole-genome analyses and the problem of identifying the most basal angiosperm.</title>
        <authorList>
            <person name="Goremykin V.V."/>
            <person name="Hirsch-Ernst K.I."/>
            <person name="Woelfl S."/>
            <person name="Hellwig F.H."/>
        </authorList>
    </citation>
    <scope>NUCLEOTIDE SEQUENCE [LARGE SCALE GENOMIC DNA]</scope>
</reference>
<name>CLPP_NYMAL</name>
<evidence type="ECO:0000255" key="1">
    <source>
        <dbReference type="HAMAP-Rule" id="MF_00444"/>
    </source>
</evidence>
<comment type="function">
    <text evidence="1">Cleaves peptides in various proteins in a process that requires ATP hydrolysis. Has a chymotrypsin-like activity. Plays a major role in the degradation of misfolded proteins.</text>
</comment>
<comment type="catalytic activity">
    <reaction evidence="1">
        <text>Hydrolysis of proteins to small peptides in the presence of ATP and magnesium. alpha-casein is the usual test substrate. In the absence of ATP, only oligopeptides shorter than five residues are hydrolyzed (such as succinyl-Leu-Tyr-|-NHMec, and Leu-Tyr-Leu-|-Tyr-Trp, in which cleavage of the -Tyr-|-Leu- and -Tyr-|-Trp bonds also occurs).</text>
        <dbReference type="EC" id="3.4.21.92"/>
    </reaction>
</comment>
<comment type="subunit">
    <text>Component of the chloroplastic Clp protease core complex.</text>
</comment>
<comment type="subcellular location">
    <subcellularLocation>
        <location evidence="1">Plastid</location>
        <location evidence="1">Chloroplast stroma</location>
    </subcellularLocation>
</comment>
<comment type="similarity">
    <text evidence="1">Belongs to the peptidase S14 family.</text>
</comment>
<gene>
    <name evidence="1" type="primary">clpP</name>
</gene>
<geneLocation type="chloroplast"/>
<keyword id="KW-0150">Chloroplast</keyword>
<keyword id="KW-0378">Hydrolase</keyword>
<keyword id="KW-0934">Plastid</keyword>
<keyword id="KW-0645">Protease</keyword>
<keyword id="KW-0720">Serine protease</keyword>
<feature type="chain" id="PRO_0000179747" description="ATP-dependent Clp protease proteolytic subunit">
    <location>
        <begin position="1"/>
        <end position="202"/>
    </location>
</feature>
<feature type="active site" description="Nucleophile" evidence="1">
    <location>
        <position position="101"/>
    </location>
</feature>
<feature type="active site" evidence="1">
    <location>
        <position position="126"/>
    </location>
</feature>
<accession>Q6EW27</accession>
<proteinExistence type="inferred from homology"/>
<organism>
    <name type="scientific">Nymphaea alba</name>
    <name type="common">White water-lily</name>
    <name type="synonym">Castalia alba</name>
    <dbReference type="NCBI Taxonomy" id="34301"/>
    <lineage>
        <taxon>Eukaryota</taxon>
        <taxon>Viridiplantae</taxon>
        <taxon>Streptophyta</taxon>
        <taxon>Embryophyta</taxon>
        <taxon>Tracheophyta</taxon>
        <taxon>Spermatophyta</taxon>
        <taxon>Magnoliopsida</taxon>
        <taxon>Nymphaeales</taxon>
        <taxon>Nymphaeaceae</taxon>
        <taxon>Nymphaea</taxon>
    </lineage>
</organism>
<protein>
    <recommendedName>
        <fullName evidence="1">ATP-dependent Clp protease proteolytic subunit</fullName>
        <ecNumber evidence="1">3.4.21.92</ecNumber>
    </recommendedName>
    <alternativeName>
        <fullName evidence="1">Endopeptidase Clp</fullName>
    </alternativeName>
</protein>
<dbReference type="EC" id="3.4.21.92" evidence="1"/>
<dbReference type="EMBL" id="AJ627251">
    <property type="protein sequence ID" value="CAF28619.1"/>
    <property type="molecule type" value="Genomic_DNA"/>
</dbReference>
<dbReference type="RefSeq" id="YP_053179.1">
    <property type="nucleotide sequence ID" value="NC_006050.1"/>
</dbReference>
<dbReference type="SMR" id="Q6EW27"/>
<dbReference type="MEROPS" id="S14.002"/>
<dbReference type="GeneID" id="2896175"/>
<dbReference type="GO" id="GO:0009570">
    <property type="term" value="C:chloroplast stroma"/>
    <property type="evidence" value="ECO:0007669"/>
    <property type="project" value="UniProtKB-SubCell"/>
</dbReference>
<dbReference type="GO" id="GO:0009368">
    <property type="term" value="C:endopeptidase Clp complex"/>
    <property type="evidence" value="ECO:0007669"/>
    <property type="project" value="TreeGrafter"/>
</dbReference>
<dbReference type="GO" id="GO:0004176">
    <property type="term" value="F:ATP-dependent peptidase activity"/>
    <property type="evidence" value="ECO:0007669"/>
    <property type="project" value="InterPro"/>
</dbReference>
<dbReference type="GO" id="GO:0051117">
    <property type="term" value="F:ATPase binding"/>
    <property type="evidence" value="ECO:0007669"/>
    <property type="project" value="TreeGrafter"/>
</dbReference>
<dbReference type="GO" id="GO:0004252">
    <property type="term" value="F:serine-type endopeptidase activity"/>
    <property type="evidence" value="ECO:0007669"/>
    <property type="project" value="UniProtKB-UniRule"/>
</dbReference>
<dbReference type="GO" id="GO:0006515">
    <property type="term" value="P:protein quality control for misfolded or incompletely synthesized proteins"/>
    <property type="evidence" value="ECO:0007669"/>
    <property type="project" value="TreeGrafter"/>
</dbReference>
<dbReference type="CDD" id="cd07017">
    <property type="entry name" value="S14_ClpP_2"/>
    <property type="match status" value="1"/>
</dbReference>
<dbReference type="FunFam" id="3.90.226.10:FF:000006">
    <property type="entry name" value="ATP-dependent Clp protease proteolytic subunit"/>
    <property type="match status" value="1"/>
</dbReference>
<dbReference type="Gene3D" id="3.90.226.10">
    <property type="entry name" value="2-enoyl-CoA Hydratase, Chain A, domain 1"/>
    <property type="match status" value="1"/>
</dbReference>
<dbReference type="HAMAP" id="MF_00444">
    <property type="entry name" value="ClpP"/>
    <property type="match status" value="1"/>
</dbReference>
<dbReference type="InterPro" id="IPR001907">
    <property type="entry name" value="ClpP"/>
</dbReference>
<dbReference type="InterPro" id="IPR029045">
    <property type="entry name" value="ClpP/crotonase-like_dom_sf"/>
</dbReference>
<dbReference type="InterPro" id="IPR023562">
    <property type="entry name" value="ClpP/TepA"/>
</dbReference>
<dbReference type="InterPro" id="IPR033135">
    <property type="entry name" value="ClpP_His_AS"/>
</dbReference>
<dbReference type="InterPro" id="IPR018215">
    <property type="entry name" value="ClpP_Ser_AS"/>
</dbReference>
<dbReference type="PANTHER" id="PTHR10381">
    <property type="entry name" value="ATP-DEPENDENT CLP PROTEASE PROTEOLYTIC SUBUNIT"/>
    <property type="match status" value="1"/>
</dbReference>
<dbReference type="PANTHER" id="PTHR10381:SF15">
    <property type="entry name" value="CHLOROPLASTIC ATP-DEPENDENT CLP PROTEASE PROTEOLYTIC SUBUNIT 1"/>
    <property type="match status" value="1"/>
</dbReference>
<dbReference type="Pfam" id="PF00574">
    <property type="entry name" value="CLP_protease"/>
    <property type="match status" value="1"/>
</dbReference>
<dbReference type="PRINTS" id="PR00127">
    <property type="entry name" value="CLPPROTEASEP"/>
</dbReference>
<dbReference type="SUPFAM" id="SSF52096">
    <property type="entry name" value="ClpP/crotonase"/>
    <property type="match status" value="1"/>
</dbReference>
<dbReference type="PROSITE" id="PS00382">
    <property type="entry name" value="CLP_PROTEASE_HIS"/>
    <property type="match status" value="1"/>
</dbReference>
<dbReference type="PROSITE" id="PS00381">
    <property type="entry name" value="CLP_PROTEASE_SER"/>
    <property type="match status" value="1"/>
</dbReference>
<sequence length="202" mass="22556">MPIGVPKVPFRSPGEEDAVWVDIYNRLHRERLLFLGQGVDSEISNQLVGLMVYLSMEDNTRDLYLFINSPGGWVIPGIAIYDAMQIVPPDVHTICMGLAASMGSFILVGGEFTKRLAFPHARVMIHQPASSFYEAQAGEFILEAEELLKLREILTRVYVQRTGKPLWVVSEDMERDVFMSATEAQAHGIVDLVAVENSADFV</sequence>